<reference key="1">
    <citation type="journal article" date="2007" name="PLoS Genet.">
        <title>Patterns and implications of gene gain and loss in the evolution of Prochlorococcus.</title>
        <authorList>
            <person name="Kettler G.C."/>
            <person name="Martiny A.C."/>
            <person name="Huang K."/>
            <person name="Zucker J."/>
            <person name="Coleman M.L."/>
            <person name="Rodrigue S."/>
            <person name="Chen F."/>
            <person name="Lapidus A."/>
            <person name="Ferriera S."/>
            <person name="Johnson J."/>
            <person name="Steglich C."/>
            <person name="Church G.M."/>
            <person name="Richardson P."/>
            <person name="Chisholm S.W."/>
        </authorList>
    </citation>
    <scope>NUCLEOTIDE SEQUENCE [LARGE SCALE GENOMIC DNA]</scope>
    <source>
        <strain>MIT 9211</strain>
    </source>
</reference>
<organism>
    <name type="scientific">Prochlorococcus marinus (strain MIT 9211)</name>
    <dbReference type="NCBI Taxonomy" id="93059"/>
    <lineage>
        <taxon>Bacteria</taxon>
        <taxon>Bacillati</taxon>
        <taxon>Cyanobacteriota</taxon>
        <taxon>Cyanophyceae</taxon>
        <taxon>Synechococcales</taxon>
        <taxon>Prochlorococcaceae</taxon>
        <taxon>Prochlorococcus</taxon>
    </lineage>
</organism>
<sequence length="197" mass="22167">MDDLSRFNQVCKKLGGRNLYLVGMMGSGKSRTGPVLAKKLSYGFVDVDDVIEKVTNQSISEIFDQEGEIGFREIETQILQEIGQRHSLVVATGGGIVTRPENWGILHQGVVIWIDLDREIALSRLRSDETPRPLLQKNLDDNFDCLFKERLPIYLESDVHLSVREESPDDVAIGICTNLQLLLLKDEGLDGRQTIEE</sequence>
<name>AROK_PROM4</name>
<gene>
    <name evidence="1" type="primary">aroK</name>
    <name type="ordered locus">P9211_01231</name>
</gene>
<keyword id="KW-0028">Amino-acid biosynthesis</keyword>
<keyword id="KW-0057">Aromatic amino acid biosynthesis</keyword>
<keyword id="KW-0067">ATP-binding</keyword>
<keyword id="KW-0963">Cytoplasm</keyword>
<keyword id="KW-0418">Kinase</keyword>
<keyword id="KW-0460">Magnesium</keyword>
<keyword id="KW-0479">Metal-binding</keyword>
<keyword id="KW-0547">Nucleotide-binding</keyword>
<keyword id="KW-1185">Reference proteome</keyword>
<keyword id="KW-0808">Transferase</keyword>
<proteinExistence type="inferred from homology"/>
<accession>A9BCW6</accession>
<feature type="chain" id="PRO_1000119063" description="Shikimate kinase">
    <location>
        <begin position="1"/>
        <end position="197"/>
    </location>
</feature>
<feature type="binding site" evidence="1">
    <location>
        <begin position="26"/>
        <end position="31"/>
    </location>
    <ligand>
        <name>ATP</name>
        <dbReference type="ChEBI" id="CHEBI:30616"/>
    </ligand>
</feature>
<feature type="binding site" evidence="1">
    <location>
        <position position="30"/>
    </location>
    <ligand>
        <name>Mg(2+)</name>
        <dbReference type="ChEBI" id="CHEBI:18420"/>
    </ligand>
</feature>
<feature type="binding site" evidence="1">
    <location>
        <position position="48"/>
    </location>
    <ligand>
        <name>substrate</name>
    </ligand>
</feature>
<feature type="binding site" evidence="1">
    <location>
        <position position="72"/>
    </location>
    <ligand>
        <name>substrate</name>
    </ligand>
</feature>
<feature type="binding site" evidence="1">
    <location>
        <position position="94"/>
    </location>
    <ligand>
        <name>substrate</name>
    </ligand>
</feature>
<feature type="binding site" evidence="1">
    <location>
        <position position="132"/>
    </location>
    <ligand>
        <name>ATP</name>
        <dbReference type="ChEBI" id="CHEBI:30616"/>
    </ligand>
</feature>
<feature type="binding site" evidence="1">
    <location>
        <position position="150"/>
    </location>
    <ligand>
        <name>substrate</name>
    </ligand>
</feature>
<evidence type="ECO:0000255" key="1">
    <source>
        <dbReference type="HAMAP-Rule" id="MF_00109"/>
    </source>
</evidence>
<dbReference type="EC" id="2.7.1.71" evidence="1"/>
<dbReference type="EMBL" id="CP000878">
    <property type="protein sequence ID" value="ABX08054.1"/>
    <property type="molecule type" value="Genomic_DNA"/>
</dbReference>
<dbReference type="RefSeq" id="WP_012194679.1">
    <property type="nucleotide sequence ID" value="NC_009976.1"/>
</dbReference>
<dbReference type="SMR" id="A9BCW6"/>
<dbReference type="STRING" id="93059.P9211_01231"/>
<dbReference type="KEGG" id="pmj:P9211_01231"/>
<dbReference type="eggNOG" id="COG0703">
    <property type="taxonomic scope" value="Bacteria"/>
</dbReference>
<dbReference type="HOGENOM" id="CLU_057607_2_3_3"/>
<dbReference type="OrthoDB" id="9800332at2"/>
<dbReference type="UniPathway" id="UPA00053">
    <property type="reaction ID" value="UER00088"/>
</dbReference>
<dbReference type="Proteomes" id="UP000000788">
    <property type="component" value="Chromosome"/>
</dbReference>
<dbReference type="GO" id="GO:0005829">
    <property type="term" value="C:cytosol"/>
    <property type="evidence" value="ECO:0007669"/>
    <property type="project" value="TreeGrafter"/>
</dbReference>
<dbReference type="GO" id="GO:0005524">
    <property type="term" value="F:ATP binding"/>
    <property type="evidence" value="ECO:0007669"/>
    <property type="project" value="UniProtKB-UniRule"/>
</dbReference>
<dbReference type="GO" id="GO:0000287">
    <property type="term" value="F:magnesium ion binding"/>
    <property type="evidence" value="ECO:0007669"/>
    <property type="project" value="UniProtKB-UniRule"/>
</dbReference>
<dbReference type="GO" id="GO:0004765">
    <property type="term" value="F:shikimate kinase activity"/>
    <property type="evidence" value="ECO:0007669"/>
    <property type="project" value="UniProtKB-UniRule"/>
</dbReference>
<dbReference type="GO" id="GO:0008652">
    <property type="term" value="P:amino acid biosynthetic process"/>
    <property type="evidence" value="ECO:0007669"/>
    <property type="project" value="UniProtKB-KW"/>
</dbReference>
<dbReference type="GO" id="GO:0009073">
    <property type="term" value="P:aromatic amino acid family biosynthetic process"/>
    <property type="evidence" value="ECO:0007669"/>
    <property type="project" value="UniProtKB-KW"/>
</dbReference>
<dbReference type="GO" id="GO:0009423">
    <property type="term" value="P:chorismate biosynthetic process"/>
    <property type="evidence" value="ECO:0007669"/>
    <property type="project" value="UniProtKB-UniRule"/>
</dbReference>
<dbReference type="CDD" id="cd00464">
    <property type="entry name" value="SK"/>
    <property type="match status" value="1"/>
</dbReference>
<dbReference type="Gene3D" id="3.40.50.300">
    <property type="entry name" value="P-loop containing nucleotide triphosphate hydrolases"/>
    <property type="match status" value="1"/>
</dbReference>
<dbReference type="HAMAP" id="MF_00109">
    <property type="entry name" value="Shikimate_kinase"/>
    <property type="match status" value="1"/>
</dbReference>
<dbReference type="InterPro" id="IPR027417">
    <property type="entry name" value="P-loop_NTPase"/>
</dbReference>
<dbReference type="InterPro" id="IPR031322">
    <property type="entry name" value="Shikimate/glucono_kinase"/>
</dbReference>
<dbReference type="InterPro" id="IPR000623">
    <property type="entry name" value="Shikimate_kinase/TSH1"/>
</dbReference>
<dbReference type="InterPro" id="IPR023000">
    <property type="entry name" value="Shikimate_kinase_CS"/>
</dbReference>
<dbReference type="PANTHER" id="PTHR21087">
    <property type="entry name" value="SHIKIMATE KINASE"/>
    <property type="match status" value="1"/>
</dbReference>
<dbReference type="PANTHER" id="PTHR21087:SF16">
    <property type="entry name" value="SHIKIMATE KINASE 1, CHLOROPLASTIC"/>
    <property type="match status" value="1"/>
</dbReference>
<dbReference type="Pfam" id="PF01202">
    <property type="entry name" value="SKI"/>
    <property type="match status" value="1"/>
</dbReference>
<dbReference type="PRINTS" id="PR01100">
    <property type="entry name" value="SHIKIMTKNASE"/>
</dbReference>
<dbReference type="SUPFAM" id="SSF52540">
    <property type="entry name" value="P-loop containing nucleoside triphosphate hydrolases"/>
    <property type="match status" value="1"/>
</dbReference>
<dbReference type="PROSITE" id="PS01128">
    <property type="entry name" value="SHIKIMATE_KINASE"/>
    <property type="match status" value="1"/>
</dbReference>
<comment type="function">
    <text evidence="1">Catalyzes the specific phosphorylation of the 3-hydroxyl group of shikimic acid using ATP as a cosubstrate.</text>
</comment>
<comment type="catalytic activity">
    <reaction evidence="1">
        <text>shikimate + ATP = 3-phosphoshikimate + ADP + H(+)</text>
        <dbReference type="Rhea" id="RHEA:13121"/>
        <dbReference type="ChEBI" id="CHEBI:15378"/>
        <dbReference type="ChEBI" id="CHEBI:30616"/>
        <dbReference type="ChEBI" id="CHEBI:36208"/>
        <dbReference type="ChEBI" id="CHEBI:145989"/>
        <dbReference type="ChEBI" id="CHEBI:456216"/>
        <dbReference type="EC" id="2.7.1.71"/>
    </reaction>
</comment>
<comment type="cofactor">
    <cofactor evidence="1">
        <name>Mg(2+)</name>
        <dbReference type="ChEBI" id="CHEBI:18420"/>
    </cofactor>
    <text evidence="1">Binds 1 Mg(2+) ion per subunit.</text>
</comment>
<comment type="pathway">
    <text evidence="1">Metabolic intermediate biosynthesis; chorismate biosynthesis; chorismate from D-erythrose 4-phosphate and phosphoenolpyruvate: step 5/7.</text>
</comment>
<comment type="subunit">
    <text evidence="1">Monomer.</text>
</comment>
<comment type="subcellular location">
    <subcellularLocation>
        <location evidence="1">Cytoplasm</location>
    </subcellularLocation>
</comment>
<comment type="similarity">
    <text evidence="1">Belongs to the shikimate kinase family.</text>
</comment>
<protein>
    <recommendedName>
        <fullName evidence="1">Shikimate kinase</fullName>
        <shortName evidence="1">SK</shortName>
        <ecNumber evidence="1">2.7.1.71</ecNumber>
    </recommendedName>
</protein>